<organism>
    <name type="scientific">Staphylococcus aureus (strain JH9)</name>
    <dbReference type="NCBI Taxonomy" id="359786"/>
    <lineage>
        <taxon>Bacteria</taxon>
        <taxon>Bacillati</taxon>
        <taxon>Bacillota</taxon>
        <taxon>Bacilli</taxon>
        <taxon>Bacillales</taxon>
        <taxon>Staphylococcaceae</taxon>
        <taxon>Staphylococcus</taxon>
    </lineage>
</organism>
<name>RLMN_STAA9</name>
<sequence>MITAEKKKKNKFLPNFDKQSIYSLRFDEMQNWLVEQGQQKFRAKQIFEWLYQKRVDSIDEMTNLSKDLRQLLKDNFTVTTLTTVVKQESKDGTIKFLFELQDGYTIETVLMRHDYGNSVCVTTQVGCRIGCTFCASTLGGLKRNLEAGEIVSQVLTVQKALDATEERVSQIVIMGIGEPFENYDEMMDFLRIVNDDNSLNIGARHITVSTSGIIPRIYDFADEDIQINFAVSLHAAKDEVRSRLMPINRAYNVEKLIEAIQYYQEKTNRRVTFEYGLFGGVNDQLEHARELAHLIKGLNCHVNLIPVNHVPERNYVKTAKNDIFKFEKELKRLGINATIRREQGSDIDAACGQLRAKERQVETR</sequence>
<dbReference type="EC" id="2.1.1.192" evidence="1"/>
<dbReference type="EMBL" id="CP000703">
    <property type="protein sequence ID" value="ABQ49076.1"/>
    <property type="molecule type" value="Genomic_DNA"/>
</dbReference>
<dbReference type="RefSeq" id="WP_000626897.1">
    <property type="nucleotide sequence ID" value="NC_009487.1"/>
</dbReference>
<dbReference type="SMR" id="A5ISA3"/>
<dbReference type="KEGG" id="saj:SaurJH9_1277"/>
<dbReference type="HOGENOM" id="CLU_029101_0_1_9"/>
<dbReference type="GO" id="GO:0005737">
    <property type="term" value="C:cytoplasm"/>
    <property type="evidence" value="ECO:0007669"/>
    <property type="project" value="UniProtKB-SubCell"/>
</dbReference>
<dbReference type="GO" id="GO:0051539">
    <property type="term" value="F:4 iron, 4 sulfur cluster binding"/>
    <property type="evidence" value="ECO:0007669"/>
    <property type="project" value="UniProtKB-UniRule"/>
</dbReference>
<dbReference type="GO" id="GO:0046872">
    <property type="term" value="F:metal ion binding"/>
    <property type="evidence" value="ECO:0007669"/>
    <property type="project" value="UniProtKB-KW"/>
</dbReference>
<dbReference type="GO" id="GO:0070040">
    <property type="term" value="F:rRNA (adenine(2503)-C2-)-methyltransferase activity"/>
    <property type="evidence" value="ECO:0007669"/>
    <property type="project" value="UniProtKB-UniRule"/>
</dbReference>
<dbReference type="GO" id="GO:0019843">
    <property type="term" value="F:rRNA binding"/>
    <property type="evidence" value="ECO:0007669"/>
    <property type="project" value="UniProtKB-UniRule"/>
</dbReference>
<dbReference type="GO" id="GO:0002935">
    <property type="term" value="F:tRNA (adenine(37)-C2)-methyltransferase activity"/>
    <property type="evidence" value="ECO:0007669"/>
    <property type="project" value="UniProtKB-UniRule"/>
</dbReference>
<dbReference type="GO" id="GO:0000049">
    <property type="term" value="F:tRNA binding"/>
    <property type="evidence" value="ECO:0007669"/>
    <property type="project" value="UniProtKB-UniRule"/>
</dbReference>
<dbReference type="GO" id="GO:0046677">
    <property type="term" value="P:response to antibiotic"/>
    <property type="evidence" value="ECO:0007669"/>
    <property type="project" value="UniProtKB-KW"/>
</dbReference>
<dbReference type="GO" id="GO:0070475">
    <property type="term" value="P:rRNA base methylation"/>
    <property type="evidence" value="ECO:0007669"/>
    <property type="project" value="UniProtKB-UniRule"/>
</dbReference>
<dbReference type="GO" id="GO:0030488">
    <property type="term" value="P:tRNA methylation"/>
    <property type="evidence" value="ECO:0007669"/>
    <property type="project" value="UniProtKB-UniRule"/>
</dbReference>
<dbReference type="CDD" id="cd01335">
    <property type="entry name" value="Radical_SAM"/>
    <property type="match status" value="1"/>
</dbReference>
<dbReference type="FunFam" id="1.10.150.530:FF:000002">
    <property type="entry name" value="Probable dual-specificity RNA methyltransferase RlmN"/>
    <property type="match status" value="1"/>
</dbReference>
<dbReference type="FunFam" id="3.20.20.70:FF:000014">
    <property type="entry name" value="Probable dual-specificity RNA methyltransferase RlmN"/>
    <property type="match status" value="1"/>
</dbReference>
<dbReference type="Gene3D" id="1.10.150.530">
    <property type="match status" value="1"/>
</dbReference>
<dbReference type="Gene3D" id="3.20.20.70">
    <property type="entry name" value="Aldolase class I"/>
    <property type="match status" value="1"/>
</dbReference>
<dbReference type="HAMAP" id="MF_01849">
    <property type="entry name" value="RNA_methyltr_RlmN"/>
    <property type="match status" value="1"/>
</dbReference>
<dbReference type="InterPro" id="IPR013785">
    <property type="entry name" value="Aldolase_TIM"/>
</dbReference>
<dbReference type="InterPro" id="IPR040072">
    <property type="entry name" value="Methyltransferase_A"/>
</dbReference>
<dbReference type="InterPro" id="IPR048641">
    <property type="entry name" value="RlmN_N"/>
</dbReference>
<dbReference type="InterPro" id="IPR027492">
    <property type="entry name" value="RNA_MTrfase_RlmN"/>
</dbReference>
<dbReference type="InterPro" id="IPR004383">
    <property type="entry name" value="rRNA_lsu_MTrfase_RlmN/Cfr"/>
</dbReference>
<dbReference type="InterPro" id="IPR007197">
    <property type="entry name" value="rSAM"/>
</dbReference>
<dbReference type="NCBIfam" id="TIGR00048">
    <property type="entry name" value="rRNA_mod_RlmN"/>
    <property type="match status" value="1"/>
</dbReference>
<dbReference type="PANTHER" id="PTHR30544">
    <property type="entry name" value="23S RRNA METHYLTRANSFERASE"/>
    <property type="match status" value="1"/>
</dbReference>
<dbReference type="PANTHER" id="PTHR30544:SF5">
    <property type="entry name" value="RADICAL SAM CORE DOMAIN-CONTAINING PROTEIN"/>
    <property type="match status" value="1"/>
</dbReference>
<dbReference type="Pfam" id="PF04055">
    <property type="entry name" value="Radical_SAM"/>
    <property type="match status" value="1"/>
</dbReference>
<dbReference type="Pfam" id="PF21016">
    <property type="entry name" value="RlmN_N"/>
    <property type="match status" value="1"/>
</dbReference>
<dbReference type="PIRSF" id="PIRSF006004">
    <property type="entry name" value="CHP00048"/>
    <property type="match status" value="1"/>
</dbReference>
<dbReference type="SFLD" id="SFLDF00275">
    <property type="entry name" value="adenosine_C2_methyltransferase"/>
    <property type="match status" value="1"/>
</dbReference>
<dbReference type="SFLD" id="SFLDG01062">
    <property type="entry name" value="methyltransferase_(Class_A)"/>
    <property type="match status" value="1"/>
</dbReference>
<dbReference type="SUPFAM" id="SSF102114">
    <property type="entry name" value="Radical SAM enzymes"/>
    <property type="match status" value="1"/>
</dbReference>
<dbReference type="PROSITE" id="PS51918">
    <property type="entry name" value="RADICAL_SAM"/>
    <property type="match status" value="1"/>
</dbReference>
<gene>
    <name evidence="1" type="primary">rlmN</name>
    <name type="ordered locus">SaurJH9_1277</name>
</gene>
<accession>A5ISA3</accession>
<keyword id="KW-0004">4Fe-4S</keyword>
<keyword id="KW-0046">Antibiotic resistance</keyword>
<keyword id="KW-0963">Cytoplasm</keyword>
<keyword id="KW-1015">Disulfide bond</keyword>
<keyword id="KW-0408">Iron</keyword>
<keyword id="KW-0411">Iron-sulfur</keyword>
<keyword id="KW-0479">Metal-binding</keyword>
<keyword id="KW-0489">Methyltransferase</keyword>
<keyword id="KW-0698">rRNA processing</keyword>
<keyword id="KW-0949">S-adenosyl-L-methionine</keyword>
<keyword id="KW-0808">Transferase</keyword>
<keyword id="KW-0819">tRNA processing</keyword>
<comment type="function">
    <text evidence="1">Specifically methylates position 2 of adenine 2503 in 23S rRNA and position 2 of adenine 37 in tRNAs. Confers resistance to some classes of antibiotics.</text>
</comment>
<comment type="catalytic activity">
    <reaction evidence="1">
        <text>adenosine(2503) in 23S rRNA + 2 reduced [2Fe-2S]-[ferredoxin] + 2 S-adenosyl-L-methionine = 2-methyladenosine(2503) in 23S rRNA + 5'-deoxyadenosine + L-methionine + 2 oxidized [2Fe-2S]-[ferredoxin] + S-adenosyl-L-homocysteine</text>
        <dbReference type="Rhea" id="RHEA:42916"/>
        <dbReference type="Rhea" id="RHEA-COMP:10000"/>
        <dbReference type="Rhea" id="RHEA-COMP:10001"/>
        <dbReference type="Rhea" id="RHEA-COMP:10152"/>
        <dbReference type="Rhea" id="RHEA-COMP:10282"/>
        <dbReference type="ChEBI" id="CHEBI:17319"/>
        <dbReference type="ChEBI" id="CHEBI:33737"/>
        <dbReference type="ChEBI" id="CHEBI:33738"/>
        <dbReference type="ChEBI" id="CHEBI:57844"/>
        <dbReference type="ChEBI" id="CHEBI:57856"/>
        <dbReference type="ChEBI" id="CHEBI:59789"/>
        <dbReference type="ChEBI" id="CHEBI:74411"/>
        <dbReference type="ChEBI" id="CHEBI:74497"/>
        <dbReference type="EC" id="2.1.1.192"/>
    </reaction>
</comment>
<comment type="catalytic activity">
    <reaction evidence="1">
        <text>adenosine(37) in tRNA + 2 reduced [2Fe-2S]-[ferredoxin] + 2 S-adenosyl-L-methionine = 2-methyladenosine(37) in tRNA + 5'-deoxyadenosine + L-methionine + 2 oxidized [2Fe-2S]-[ferredoxin] + S-adenosyl-L-homocysteine</text>
        <dbReference type="Rhea" id="RHEA:43332"/>
        <dbReference type="Rhea" id="RHEA-COMP:10000"/>
        <dbReference type="Rhea" id="RHEA-COMP:10001"/>
        <dbReference type="Rhea" id="RHEA-COMP:10162"/>
        <dbReference type="Rhea" id="RHEA-COMP:10485"/>
        <dbReference type="ChEBI" id="CHEBI:17319"/>
        <dbReference type="ChEBI" id="CHEBI:33737"/>
        <dbReference type="ChEBI" id="CHEBI:33738"/>
        <dbReference type="ChEBI" id="CHEBI:57844"/>
        <dbReference type="ChEBI" id="CHEBI:57856"/>
        <dbReference type="ChEBI" id="CHEBI:59789"/>
        <dbReference type="ChEBI" id="CHEBI:74411"/>
        <dbReference type="ChEBI" id="CHEBI:74497"/>
        <dbReference type="EC" id="2.1.1.192"/>
    </reaction>
</comment>
<comment type="cofactor">
    <cofactor evidence="1">
        <name>[4Fe-4S] cluster</name>
        <dbReference type="ChEBI" id="CHEBI:49883"/>
    </cofactor>
    <text evidence="1">Binds 1 [4Fe-4S] cluster. The cluster is coordinated with 3 cysteines and an exchangeable S-adenosyl-L-methionine.</text>
</comment>
<comment type="subcellular location">
    <subcellularLocation>
        <location evidence="1">Cytoplasm</location>
    </subcellularLocation>
</comment>
<comment type="miscellaneous">
    <text evidence="1">Reaction proceeds by a ping-pong mechanism involving intermediate methylation of a conserved cysteine residue.</text>
</comment>
<comment type="similarity">
    <text evidence="1">Belongs to the radical SAM superfamily. RlmN family.</text>
</comment>
<protein>
    <recommendedName>
        <fullName evidence="1">Probable dual-specificity RNA methyltransferase RlmN</fullName>
        <ecNumber evidence="1">2.1.1.192</ecNumber>
    </recommendedName>
    <alternativeName>
        <fullName evidence="1">23S rRNA (adenine(2503)-C(2))-methyltransferase</fullName>
    </alternativeName>
    <alternativeName>
        <fullName evidence="1">23S rRNA m2A2503 methyltransferase</fullName>
    </alternativeName>
    <alternativeName>
        <fullName evidence="1">Ribosomal RNA large subunit methyltransferase N</fullName>
    </alternativeName>
    <alternativeName>
        <fullName evidence="1">tRNA (adenine(37)-C(2))-methyltransferase</fullName>
    </alternativeName>
    <alternativeName>
        <fullName evidence="1">tRNA m2A37 methyltransferase</fullName>
    </alternativeName>
</protein>
<evidence type="ECO:0000255" key="1">
    <source>
        <dbReference type="HAMAP-Rule" id="MF_01849"/>
    </source>
</evidence>
<evidence type="ECO:0000255" key="2">
    <source>
        <dbReference type="PROSITE-ProRule" id="PRU01266"/>
    </source>
</evidence>
<proteinExistence type="inferred from homology"/>
<reference key="1">
    <citation type="submission" date="2007-05" db="EMBL/GenBank/DDBJ databases">
        <title>Complete sequence of chromosome of Staphylococcus aureus subsp. aureus JH9.</title>
        <authorList>
            <consortium name="US DOE Joint Genome Institute"/>
            <person name="Copeland A."/>
            <person name="Lucas S."/>
            <person name="Lapidus A."/>
            <person name="Barry K."/>
            <person name="Detter J.C."/>
            <person name="Glavina del Rio T."/>
            <person name="Hammon N."/>
            <person name="Israni S."/>
            <person name="Pitluck S."/>
            <person name="Chain P."/>
            <person name="Malfatti S."/>
            <person name="Shin M."/>
            <person name="Vergez L."/>
            <person name="Schmutz J."/>
            <person name="Larimer F."/>
            <person name="Land M."/>
            <person name="Hauser L."/>
            <person name="Kyrpides N."/>
            <person name="Kim E."/>
            <person name="Tomasz A."/>
            <person name="Richardson P."/>
        </authorList>
    </citation>
    <scope>NUCLEOTIDE SEQUENCE [LARGE SCALE GENOMIC DNA]</scope>
    <source>
        <strain>JH9</strain>
    </source>
</reference>
<feature type="chain" id="PRO_0000350430" description="Probable dual-specificity RNA methyltransferase RlmN">
    <location>
        <begin position="1"/>
        <end position="364"/>
    </location>
</feature>
<feature type="domain" description="Radical SAM core" evidence="2">
    <location>
        <begin position="113"/>
        <end position="346"/>
    </location>
</feature>
<feature type="active site" description="Proton acceptor" evidence="1">
    <location>
        <position position="107"/>
    </location>
</feature>
<feature type="active site" description="S-methylcysteine intermediate" evidence="1">
    <location>
        <position position="351"/>
    </location>
</feature>
<feature type="binding site" evidence="1">
    <location>
        <position position="127"/>
    </location>
    <ligand>
        <name>[4Fe-4S] cluster</name>
        <dbReference type="ChEBI" id="CHEBI:49883"/>
        <note>4Fe-4S-S-AdoMet</note>
    </ligand>
</feature>
<feature type="binding site" evidence="1">
    <location>
        <position position="131"/>
    </location>
    <ligand>
        <name>[4Fe-4S] cluster</name>
        <dbReference type="ChEBI" id="CHEBI:49883"/>
        <note>4Fe-4S-S-AdoMet</note>
    </ligand>
</feature>
<feature type="binding site" evidence="1">
    <location>
        <position position="134"/>
    </location>
    <ligand>
        <name>[4Fe-4S] cluster</name>
        <dbReference type="ChEBI" id="CHEBI:49883"/>
        <note>4Fe-4S-S-AdoMet</note>
    </ligand>
</feature>
<feature type="binding site" evidence="1">
    <location>
        <begin position="177"/>
        <end position="178"/>
    </location>
    <ligand>
        <name>S-adenosyl-L-methionine</name>
        <dbReference type="ChEBI" id="CHEBI:59789"/>
    </ligand>
</feature>
<feature type="binding site" evidence="1">
    <location>
        <position position="209"/>
    </location>
    <ligand>
        <name>S-adenosyl-L-methionine</name>
        <dbReference type="ChEBI" id="CHEBI:59789"/>
    </ligand>
</feature>
<feature type="binding site" evidence="1">
    <location>
        <begin position="232"/>
        <end position="234"/>
    </location>
    <ligand>
        <name>S-adenosyl-L-methionine</name>
        <dbReference type="ChEBI" id="CHEBI:59789"/>
    </ligand>
</feature>
<feature type="binding site" evidence="1">
    <location>
        <position position="308"/>
    </location>
    <ligand>
        <name>S-adenosyl-L-methionine</name>
        <dbReference type="ChEBI" id="CHEBI:59789"/>
    </ligand>
</feature>
<feature type="disulfide bond" description="(transient)" evidence="1">
    <location>
        <begin position="120"/>
        <end position="351"/>
    </location>
</feature>